<name>YPLC1_STAAU</name>
<feature type="signal peptide" evidence="1">
    <location>
        <begin position="1"/>
        <end position="24"/>
    </location>
</feature>
<feature type="chain" id="PRO_0000282170" description="Uncharacterized lipoprotein in plc 3'region">
    <location>
        <begin position="25"/>
        <end position="256"/>
    </location>
</feature>
<feature type="lipid moiety-binding region" description="N-palmitoyl cysteine" evidence="1">
    <location>
        <position position="25"/>
    </location>
</feature>
<feature type="lipid moiety-binding region" description="S-diacylglycerol cysteine" evidence="1">
    <location>
        <position position="25"/>
    </location>
</feature>
<reference key="1">
    <citation type="journal article" date="2002" name="J. Bacteriol.">
        <title>Type 1 capsule genes of Staphylococcus aureus are carried in a staphylococcal cassette chromosome genetic element.</title>
        <authorList>
            <person name="Luong T.T."/>
            <person name="Ouyang S."/>
            <person name="Bush K."/>
            <person name="Lee C.Y."/>
        </authorList>
    </citation>
    <scope>NUCLEOTIDE SEQUENCE [GENOMIC DNA]</scope>
    <source>
        <strain>ATCC 49951 / M / NCTC 10649</strain>
    </source>
</reference>
<organism>
    <name type="scientific">Staphylococcus aureus</name>
    <dbReference type="NCBI Taxonomy" id="1280"/>
    <lineage>
        <taxon>Bacteria</taxon>
        <taxon>Bacillati</taxon>
        <taxon>Bacillota</taxon>
        <taxon>Bacilli</taxon>
        <taxon>Bacillales</taxon>
        <taxon>Staphylococcaceae</taxon>
        <taxon>Staphylococcus</taxon>
    </lineage>
</organism>
<comment type="subcellular location">
    <subcellularLocation>
        <location evidence="1">Cell membrane</location>
        <topology evidence="1">Lipid-anchor</topology>
    </subcellularLocation>
</comment>
<comment type="similarity">
    <text evidence="2">Belongs to the staphylococcal tandem lipoprotein family.</text>
</comment>
<protein>
    <recommendedName>
        <fullName>Uncharacterized lipoprotein in plc 3'region</fullName>
    </recommendedName>
    <alternativeName>
        <fullName>ORF CM05</fullName>
    </alternativeName>
</protein>
<accession>Q936F2</accession>
<keyword id="KW-1003">Cell membrane</keyword>
<keyword id="KW-0449">Lipoprotein</keyword>
<keyword id="KW-0472">Membrane</keyword>
<keyword id="KW-0564">Palmitate</keyword>
<keyword id="KW-0732">Signal</keyword>
<sequence length="256" mass="29404">MIKRVNKLVLGISLLFLVISIAAGCGIGKEAEIKKSFEKTLSMYPIKNLEDLYDKEGYRDDEFDKNDKGTWTISSEMAIQKKGEALNIKGMVLKLNRNTRSAKGFYYVNAIKKDEDGRPQDNQIEYPVKMVDNKIIPTKEIKDDNIKKEIENFKFLVQYGNFKDLSKYKDGDISYNPEVPSYSAKYQLTNDDYNVKQLRKRYNIPTNKAPKLLLKGTGNLKGSSVGYKDIEFTFVEKKGENIYFSDSLHLKPSEDK</sequence>
<dbReference type="EMBL" id="U10927">
    <property type="protein sequence ID" value="AAL26686.1"/>
    <property type="molecule type" value="Genomic_DNA"/>
</dbReference>
<dbReference type="RefSeq" id="WP_115294937.1">
    <property type="nucleotide sequence ID" value="NZ_UGZL01000001.1"/>
</dbReference>
<dbReference type="SMR" id="Q936F2"/>
<dbReference type="GO" id="GO:0005886">
    <property type="term" value="C:plasma membrane"/>
    <property type="evidence" value="ECO:0007669"/>
    <property type="project" value="UniProtKB-SubCell"/>
</dbReference>
<dbReference type="Gene3D" id="2.50.20.40">
    <property type="match status" value="1"/>
</dbReference>
<dbReference type="InterPro" id="IPR007595">
    <property type="entry name" value="Csa"/>
</dbReference>
<dbReference type="InterPro" id="IPR038641">
    <property type="entry name" value="Csa_sf"/>
</dbReference>
<dbReference type="NCBIfam" id="TIGR01742">
    <property type="entry name" value="SA_tandem_lipo"/>
    <property type="match status" value="1"/>
</dbReference>
<dbReference type="Pfam" id="PF04507">
    <property type="entry name" value="DUF576"/>
    <property type="match status" value="1"/>
</dbReference>
<dbReference type="PROSITE" id="PS51257">
    <property type="entry name" value="PROKAR_LIPOPROTEIN"/>
    <property type="match status" value="1"/>
</dbReference>
<proteinExistence type="inferred from homology"/>
<evidence type="ECO:0000255" key="1">
    <source>
        <dbReference type="PROSITE-ProRule" id="PRU00303"/>
    </source>
</evidence>
<evidence type="ECO:0000305" key="2"/>